<gene>
    <name evidence="1" type="primary">nadD</name>
    <name type="ordered locus">CPF_2380</name>
</gene>
<dbReference type="EC" id="2.7.7.18" evidence="1"/>
<dbReference type="EMBL" id="CP000246">
    <property type="protein sequence ID" value="ABG84400.1"/>
    <property type="molecule type" value="Genomic_DNA"/>
</dbReference>
<dbReference type="RefSeq" id="WP_003453701.1">
    <property type="nucleotide sequence ID" value="NC_008261.1"/>
</dbReference>
<dbReference type="SMR" id="Q0TNI7"/>
<dbReference type="STRING" id="195103.CPF_2380"/>
<dbReference type="PaxDb" id="195103-CPF_2380"/>
<dbReference type="GeneID" id="93001341"/>
<dbReference type="KEGG" id="cpf:CPF_2380"/>
<dbReference type="eggNOG" id="COG1057">
    <property type="taxonomic scope" value="Bacteria"/>
</dbReference>
<dbReference type="HOGENOM" id="CLU_069765_0_1_9"/>
<dbReference type="UniPathway" id="UPA00253">
    <property type="reaction ID" value="UER00332"/>
</dbReference>
<dbReference type="Proteomes" id="UP000001823">
    <property type="component" value="Chromosome"/>
</dbReference>
<dbReference type="GO" id="GO:0005524">
    <property type="term" value="F:ATP binding"/>
    <property type="evidence" value="ECO:0007669"/>
    <property type="project" value="UniProtKB-KW"/>
</dbReference>
<dbReference type="GO" id="GO:0004515">
    <property type="term" value="F:nicotinate-nucleotide adenylyltransferase activity"/>
    <property type="evidence" value="ECO:0007669"/>
    <property type="project" value="UniProtKB-UniRule"/>
</dbReference>
<dbReference type="GO" id="GO:0009435">
    <property type="term" value="P:NAD biosynthetic process"/>
    <property type="evidence" value="ECO:0007669"/>
    <property type="project" value="UniProtKB-UniRule"/>
</dbReference>
<dbReference type="CDD" id="cd02165">
    <property type="entry name" value="NMNAT"/>
    <property type="match status" value="1"/>
</dbReference>
<dbReference type="Gene3D" id="3.40.50.620">
    <property type="entry name" value="HUPs"/>
    <property type="match status" value="1"/>
</dbReference>
<dbReference type="HAMAP" id="MF_00244">
    <property type="entry name" value="NaMN_adenylyltr"/>
    <property type="match status" value="1"/>
</dbReference>
<dbReference type="InterPro" id="IPR004821">
    <property type="entry name" value="Cyt_trans-like"/>
</dbReference>
<dbReference type="InterPro" id="IPR005248">
    <property type="entry name" value="NadD/NMNAT"/>
</dbReference>
<dbReference type="InterPro" id="IPR014729">
    <property type="entry name" value="Rossmann-like_a/b/a_fold"/>
</dbReference>
<dbReference type="NCBIfam" id="TIGR00125">
    <property type="entry name" value="cyt_tran_rel"/>
    <property type="match status" value="1"/>
</dbReference>
<dbReference type="NCBIfam" id="TIGR00482">
    <property type="entry name" value="nicotinate (nicotinamide) nucleotide adenylyltransferase"/>
    <property type="match status" value="1"/>
</dbReference>
<dbReference type="NCBIfam" id="NF000840">
    <property type="entry name" value="PRK00071.1-3"/>
    <property type="match status" value="1"/>
</dbReference>
<dbReference type="PANTHER" id="PTHR39321">
    <property type="entry name" value="NICOTINATE-NUCLEOTIDE ADENYLYLTRANSFERASE-RELATED"/>
    <property type="match status" value="1"/>
</dbReference>
<dbReference type="PANTHER" id="PTHR39321:SF3">
    <property type="entry name" value="PHOSPHOPANTETHEINE ADENYLYLTRANSFERASE"/>
    <property type="match status" value="1"/>
</dbReference>
<dbReference type="Pfam" id="PF01467">
    <property type="entry name" value="CTP_transf_like"/>
    <property type="match status" value="1"/>
</dbReference>
<dbReference type="SUPFAM" id="SSF52374">
    <property type="entry name" value="Nucleotidylyl transferase"/>
    <property type="match status" value="1"/>
</dbReference>
<evidence type="ECO:0000255" key="1">
    <source>
        <dbReference type="HAMAP-Rule" id="MF_00244"/>
    </source>
</evidence>
<accession>Q0TNI7</accession>
<reference key="1">
    <citation type="journal article" date="2006" name="Genome Res.">
        <title>Skewed genomic variability in strains of the toxigenic bacterial pathogen, Clostridium perfringens.</title>
        <authorList>
            <person name="Myers G.S.A."/>
            <person name="Rasko D.A."/>
            <person name="Cheung J.K."/>
            <person name="Ravel J."/>
            <person name="Seshadri R."/>
            <person name="DeBoy R.T."/>
            <person name="Ren Q."/>
            <person name="Varga J."/>
            <person name="Awad M.M."/>
            <person name="Brinkac L.M."/>
            <person name="Daugherty S.C."/>
            <person name="Haft D.H."/>
            <person name="Dodson R.J."/>
            <person name="Madupu R."/>
            <person name="Nelson W.C."/>
            <person name="Rosovitz M.J."/>
            <person name="Sullivan S.A."/>
            <person name="Khouri H."/>
            <person name="Dimitrov G.I."/>
            <person name="Watkins K.L."/>
            <person name="Mulligan S."/>
            <person name="Benton J."/>
            <person name="Radune D."/>
            <person name="Fisher D.J."/>
            <person name="Atkins H.S."/>
            <person name="Hiscox T."/>
            <person name="Jost B.H."/>
            <person name="Billington S.J."/>
            <person name="Songer J.G."/>
            <person name="McClane B.A."/>
            <person name="Titball R.W."/>
            <person name="Rood J.I."/>
            <person name="Melville S.B."/>
            <person name="Paulsen I.T."/>
        </authorList>
    </citation>
    <scope>NUCLEOTIDE SEQUENCE [LARGE SCALE GENOMIC DNA]</scope>
    <source>
        <strain>ATCC 13124 / DSM 756 / JCM 1290 / NCIMB 6125 / NCTC 8237 / S 107 / Type A</strain>
    </source>
</reference>
<protein>
    <recommendedName>
        <fullName evidence="1">Probable nicotinate-nucleotide adenylyltransferase</fullName>
        <ecNumber evidence="1">2.7.7.18</ecNumber>
    </recommendedName>
    <alternativeName>
        <fullName evidence="1">Deamido-NAD(+) diphosphorylase</fullName>
    </alternativeName>
    <alternativeName>
        <fullName evidence="1">Deamido-NAD(+) pyrophosphorylase</fullName>
    </alternativeName>
    <alternativeName>
        <fullName evidence="1">Nicotinate mononucleotide adenylyltransferase</fullName>
        <shortName evidence="1">NaMN adenylyltransferase</shortName>
    </alternativeName>
</protein>
<sequence length="202" mass="24032">MKKIGVFGGTFDPIHIGHIYIAYEAYKILELDEVIFMPAGNPPHKKWKDITDEIIRYEMVKKAIEPYSFFSINNYEIEKKGLSFTYETLRYLHESFKEVELYFITGADCLINLNSWKNINEIFKFSNLVVFNRPGFDKNDLLKRKEEFDREYCTNIVYLDLLNIEISSTLIRERVHDSLEVKFFLPPGVVDIIDKYNLYRRE</sequence>
<name>NADD_CLOP1</name>
<organism>
    <name type="scientific">Clostridium perfringens (strain ATCC 13124 / DSM 756 / JCM 1290 / NCIMB 6125 / NCTC 8237 / Type A)</name>
    <dbReference type="NCBI Taxonomy" id="195103"/>
    <lineage>
        <taxon>Bacteria</taxon>
        <taxon>Bacillati</taxon>
        <taxon>Bacillota</taxon>
        <taxon>Clostridia</taxon>
        <taxon>Eubacteriales</taxon>
        <taxon>Clostridiaceae</taxon>
        <taxon>Clostridium</taxon>
    </lineage>
</organism>
<keyword id="KW-0067">ATP-binding</keyword>
<keyword id="KW-0520">NAD</keyword>
<keyword id="KW-0547">Nucleotide-binding</keyword>
<keyword id="KW-0548">Nucleotidyltransferase</keyword>
<keyword id="KW-0662">Pyridine nucleotide biosynthesis</keyword>
<keyword id="KW-0808">Transferase</keyword>
<proteinExistence type="inferred from homology"/>
<comment type="function">
    <text evidence="1">Catalyzes the reversible adenylation of nicotinate mononucleotide (NaMN) to nicotinic acid adenine dinucleotide (NaAD).</text>
</comment>
<comment type="catalytic activity">
    <reaction evidence="1">
        <text>nicotinate beta-D-ribonucleotide + ATP + H(+) = deamido-NAD(+) + diphosphate</text>
        <dbReference type="Rhea" id="RHEA:22860"/>
        <dbReference type="ChEBI" id="CHEBI:15378"/>
        <dbReference type="ChEBI" id="CHEBI:30616"/>
        <dbReference type="ChEBI" id="CHEBI:33019"/>
        <dbReference type="ChEBI" id="CHEBI:57502"/>
        <dbReference type="ChEBI" id="CHEBI:58437"/>
        <dbReference type="EC" id="2.7.7.18"/>
    </reaction>
</comment>
<comment type="pathway">
    <text evidence="1">Cofactor biosynthesis; NAD(+) biosynthesis; deamido-NAD(+) from nicotinate D-ribonucleotide: step 1/1.</text>
</comment>
<comment type="similarity">
    <text evidence="1">Belongs to the NadD family.</text>
</comment>
<feature type="chain" id="PRO_0000310109" description="Probable nicotinate-nucleotide adenylyltransferase">
    <location>
        <begin position="1"/>
        <end position="202"/>
    </location>
</feature>